<reference key="1">
    <citation type="journal article" date="2009" name="J. Bacteriol.">
        <title>Complete genome sequence of the anaerobic, protein-degrading hyperthermophilic crenarchaeon Desulfurococcus kamchatkensis.</title>
        <authorList>
            <person name="Ravin N.V."/>
            <person name="Mardanov A.V."/>
            <person name="Beletsky A.V."/>
            <person name="Kublanov I.V."/>
            <person name="Kolganova T.V."/>
            <person name="Lebedinsky A.V."/>
            <person name="Chernyh N.A."/>
            <person name="Bonch-Osmolovskaya E.A."/>
            <person name="Skryabin K.G."/>
        </authorList>
    </citation>
    <scope>NUCLEOTIDE SEQUENCE [LARGE SCALE GENOMIC DNA]</scope>
    <source>
        <strain>DSM 18924 / JCM 16383 / VKM B-2413 / 1221n</strain>
    </source>
</reference>
<gene>
    <name type="primary">cdc6</name>
    <name type="ordered locus">DKAM_1377</name>
</gene>
<dbReference type="EMBL" id="CP001140">
    <property type="protein sequence ID" value="ACL11703.1"/>
    <property type="molecule type" value="Genomic_DNA"/>
</dbReference>
<dbReference type="RefSeq" id="WP_012609044.1">
    <property type="nucleotide sequence ID" value="NC_011766.1"/>
</dbReference>
<dbReference type="SMR" id="B8D6H2"/>
<dbReference type="STRING" id="490899.DKAM_1377"/>
<dbReference type="GeneID" id="7171419"/>
<dbReference type="KEGG" id="dka:DKAM_1377"/>
<dbReference type="eggNOG" id="arCOG00467">
    <property type="taxonomic scope" value="Archaea"/>
</dbReference>
<dbReference type="HOGENOM" id="CLU_025112_3_1_2"/>
<dbReference type="Proteomes" id="UP000006903">
    <property type="component" value="Chromosome"/>
</dbReference>
<dbReference type="GO" id="GO:0005524">
    <property type="term" value="F:ATP binding"/>
    <property type="evidence" value="ECO:0007669"/>
    <property type="project" value="UniProtKB-UniRule"/>
</dbReference>
<dbReference type="GO" id="GO:0016887">
    <property type="term" value="F:ATP hydrolysis activity"/>
    <property type="evidence" value="ECO:0007669"/>
    <property type="project" value="InterPro"/>
</dbReference>
<dbReference type="GO" id="GO:0006260">
    <property type="term" value="P:DNA replication"/>
    <property type="evidence" value="ECO:0007669"/>
    <property type="project" value="UniProtKB-UniRule"/>
</dbReference>
<dbReference type="CDD" id="cd08768">
    <property type="entry name" value="Cdc6_C"/>
    <property type="match status" value="1"/>
</dbReference>
<dbReference type="CDD" id="cd18139">
    <property type="entry name" value="HLD_clamp_RarA"/>
    <property type="match status" value="1"/>
</dbReference>
<dbReference type="FunFam" id="1.10.8.60:FF:000073">
    <property type="entry name" value="ORC1-type DNA replication protein"/>
    <property type="match status" value="1"/>
</dbReference>
<dbReference type="FunFam" id="3.40.50.300:FF:000930">
    <property type="entry name" value="ORC1-type DNA replication protein"/>
    <property type="match status" value="1"/>
</dbReference>
<dbReference type="Gene3D" id="1.10.8.60">
    <property type="match status" value="1"/>
</dbReference>
<dbReference type="Gene3D" id="3.40.50.300">
    <property type="entry name" value="P-loop containing nucleotide triphosphate hydrolases"/>
    <property type="match status" value="1"/>
</dbReference>
<dbReference type="Gene3D" id="1.10.10.10">
    <property type="entry name" value="Winged helix-like DNA-binding domain superfamily/Winged helix DNA-binding domain"/>
    <property type="match status" value="1"/>
</dbReference>
<dbReference type="HAMAP" id="MF_01407">
    <property type="entry name" value="ORC1_type_DNA_replic_protein"/>
    <property type="match status" value="1"/>
</dbReference>
<dbReference type="InterPro" id="IPR003593">
    <property type="entry name" value="AAA+_ATPase"/>
</dbReference>
<dbReference type="InterPro" id="IPR049945">
    <property type="entry name" value="AAA_22"/>
</dbReference>
<dbReference type="InterPro" id="IPR015163">
    <property type="entry name" value="Cdc6_C"/>
</dbReference>
<dbReference type="InterPro" id="IPR055237">
    <property type="entry name" value="Cdc6_lid"/>
</dbReference>
<dbReference type="InterPro" id="IPR050311">
    <property type="entry name" value="ORC1/CDC6"/>
</dbReference>
<dbReference type="InterPro" id="IPR014277">
    <property type="entry name" value="Orc1/Cdc6_arc"/>
</dbReference>
<dbReference type="InterPro" id="IPR027417">
    <property type="entry name" value="P-loop_NTPase"/>
</dbReference>
<dbReference type="InterPro" id="IPR036388">
    <property type="entry name" value="WH-like_DNA-bd_sf"/>
</dbReference>
<dbReference type="InterPro" id="IPR036390">
    <property type="entry name" value="WH_DNA-bd_sf"/>
</dbReference>
<dbReference type="NCBIfam" id="TIGR02928">
    <property type="entry name" value="orc1/cdc6 family replication initiation protein"/>
    <property type="match status" value="1"/>
</dbReference>
<dbReference type="PANTHER" id="PTHR10763:SF26">
    <property type="entry name" value="CELL DIVISION CONTROL PROTEIN 6 HOMOLOG"/>
    <property type="match status" value="1"/>
</dbReference>
<dbReference type="PANTHER" id="PTHR10763">
    <property type="entry name" value="CELL DIVISION CONTROL PROTEIN 6-RELATED"/>
    <property type="match status" value="1"/>
</dbReference>
<dbReference type="Pfam" id="PF13401">
    <property type="entry name" value="AAA_22"/>
    <property type="match status" value="1"/>
</dbReference>
<dbReference type="Pfam" id="PF09079">
    <property type="entry name" value="Cdc6_C"/>
    <property type="match status" value="1"/>
</dbReference>
<dbReference type="Pfam" id="PF22703">
    <property type="entry name" value="Cdc6_lid"/>
    <property type="match status" value="1"/>
</dbReference>
<dbReference type="SMART" id="SM00382">
    <property type="entry name" value="AAA"/>
    <property type="match status" value="1"/>
</dbReference>
<dbReference type="SMART" id="SM01074">
    <property type="entry name" value="Cdc6_C"/>
    <property type="match status" value="1"/>
</dbReference>
<dbReference type="SUPFAM" id="SSF52540">
    <property type="entry name" value="P-loop containing nucleoside triphosphate hydrolases"/>
    <property type="match status" value="1"/>
</dbReference>
<dbReference type="SUPFAM" id="SSF46785">
    <property type="entry name" value="Winged helix' DNA-binding domain"/>
    <property type="match status" value="1"/>
</dbReference>
<organism>
    <name type="scientific">Desulfurococcus amylolyticus (strain DSM 18924 / JCM 16383 / VKM B-2413 / 1221n)</name>
    <name type="common">Desulfurococcus kamchatkensis</name>
    <dbReference type="NCBI Taxonomy" id="490899"/>
    <lineage>
        <taxon>Archaea</taxon>
        <taxon>Thermoproteota</taxon>
        <taxon>Thermoprotei</taxon>
        <taxon>Desulfurococcales</taxon>
        <taxon>Desulfurococcaceae</taxon>
        <taxon>Desulfurococcus</taxon>
    </lineage>
</organism>
<accession>B8D6H2</accession>
<feature type="chain" id="PRO_1000184586" description="ORC1-type DNA replication protein">
    <location>
        <begin position="1"/>
        <end position="394"/>
    </location>
</feature>
<feature type="binding site" evidence="1">
    <location>
        <begin position="68"/>
        <end position="72"/>
    </location>
    <ligand>
        <name>ATP</name>
        <dbReference type="ChEBI" id="CHEBI:30616"/>
    </ligand>
</feature>
<feature type="binding site" evidence="1">
    <location>
        <position position="212"/>
    </location>
    <ligand>
        <name>ATP</name>
        <dbReference type="ChEBI" id="CHEBI:30616"/>
    </ligand>
</feature>
<feature type="binding site" evidence="1">
    <location>
        <position position="224"/>
    </location>
    <ligand>
        <name>ATP</name>
        <dbReference type="ChEBI" id="CHEBI:30616"/>
    </ligand>
</feature>
<comment type="function">
    <text evidence="1">Involved in regulation of DNA replication.</text>
</comment>
<comment type="similarity">
    <text evidence="1">Belongs to the CDC6/cdc18 family.</text>
</comment>
<keyword id="KW-0067">ATP-binding</keyword>
<keyword id="KW-0235">DNA replication</keyword>
<keyword id="KW-0547">Nucleotide-binding</keyword>
<protein>
    <recommendedName>
        <fullName evidence="1">ORC1-type DNA replication protein</fullName>
    </recommendedName>
</protein>
<name>CDC6_DESA1</name>
<sequence>MADIIDELIRKRGFASRIFRNREVLHPDYIPDTLPHRENEIRRLAEHLLVSAQGMRPSNVLIYGLTGTGKTVVVKYVVSKLKEKASSLNKRLDYAYVNTRKLDTTYRVIASIAQSIGLRVPHTGLAISEVYRRYINALDSWGGLHIIVLDEVDYYVKREGDDLIYKLVRANEELSKAKIVLIGITNDVNFVENLDPRVRSSMGEIEMVFPPYNAEQLFTILKQRAELAFNQGVIEDGVISYCSALAAREHGDARRALDLLRVSGEIAEREGAERVTIEYVKKATLEIEEGRIYQSVVTLPLHQKLVLKKIVELVEAKESTTTGEVYTAYSNIMRNLKYEPLSLRRISEIISQLDMMGLIISEVVNRGKYGITRIIKIRKDMLPVIKDALKDVEA</sequence>
<proteinExistence type="inferred from homology"/>
<evidence type="ECO:0000255" key="1">
    <source>
        <dbReference type="HAMAP-Rule" id="MF_01407"/>
    </source>
</evidence>